<protein>
    <recommendedName>
        <fullName>Chymotrypsinogen A</fullName>
        <ecNumber>3.4.21.1</ecNumber>
    </recommendedName>
    <component>
        <recommendedName>
            <fullName>Chymotrypsin A chain A</fullName>
        </recommendedName>
    </component>
    <component>
        <recommendedName>
            <fullName>Chymotrypsin A chain B</fullName>
        </recommendedName>
    </component>
    <component>
        <recommendedName>
            <fullName>Chymotrypsin A chain C</fullName>
        </recommendedName>
    </component>
</protein>
<evidence type="ECO:0000255" key="1">
    <source>
        <dbReference type="PROSITE-ProRule" id="PRU00274"/>
    </source>
</evidence>
<evidence type="ECO:0000255" key="2">
    <source>
        <dbReference type="PROSITE-ProRule" id="PRU10078"/>
    </source>
</evidence>
<evidence type="ECO:0000255" key="3">
    <source>
        <dbReference type="PROSITE-ProRule" id="PRU10079"/>
    </source>
</evidence>
<evidence type="ECO:0007829" key="4">
    <source>
        <dbReference type="PDB" id="1CGI"/>
    </source>
</evidence>
<evidence type="ECO:0007829" key="5">
    <source>
        <dbReference type="PDB" id="1GMD"/>
    </source>
</evidence>
<evidence type="ECO:0007829" key="6">
    <source>
        <dbReference type="PDB" id="1OXG"/>
    </source>
</evidence>
<evidence type="ECO:0007829" key="7">
    <source>
        <dbReference type="PDB" id="1YPH"/>
    </source>
</evidence>
<evidence type="ECO:0007829" key="8">
    <source>
        <dbReference type="PDB" id="2CGA"/>
    </source>
</evidence>
<evidence type="ECO:0007829" key="9">
    <source>
        <dbReference type="PDB" id="2GCT"/>
    </source>
</evidence>
<evidence type="ECO:0007829" key="10">
    <source>
        <dbReference type="PDB" id="6CHA"/>
    </source>
</evidence>
<reference key="1">
    <citation type="journal article" date="1966" name="Biochem. J.">
        <title>Location of disulphide bridges by diagonal paper electrophoresis. The disulphide bridges of bovine chymotrypsinogen A.</title>
        <authorList>
            <person name="Brown J.R."/>
            <person name="Hartley B.S."/>
        </authorList>
    </citation>
    <scope>PROTEIN SEQUENCE</scope>
    <scope>DISULFIDE BONDS</scope>
    <scope>ACTIVE SITE</scope>
</reference>
<reference key="2">
    <citation type="journal article" date="1969" name="Nature">
        <title>Role of a buried acid group in the mechanism of action of chymotrypsin.</title>
        <authorList>
            <person name="Blow D.M."/>
            <person name="Birktoft J.J."/>
            <person name="Hartley B.S."/>
        </authorList>
    </citation>
    <scope>SEQUENCE REVISION TO 102</scope>
</reference>
<reference key="3">
    <citation type="journal article" date="1964" name="Nature">
        <title>Amino-acid sequence of bovine chymotrypsinogen-A.</title>
        <authorList>
            <person name="Hartley B.S."/>
        </authorList>
    </citation>
    <scope>PRELIMINARY PROTEIN SEQUENCE</scope>
</reference>
<reference key="4">
    <citation type="journal article" date="1966" name="Biochim. Biophys. Acta">
        <title>Covalent structure of bovine chymotrypsinogen A.</title>
        <authorList>
            <person name="Meloun B."/>
            <person name="Kluh I."/>
            <person name="Kostka V."/>
            <person name="Moravek L."/>
            <person name="Prusik Z."/>
            <person name="Vanacek J."/>
            <person name="Keil B."/>
            <person name="Sorm F."/>
        </authorList>
    </citation>
    <scope>PROTEIN SEQUENCE</scope>
    <scope>DISULFIDE BONDS</scope>
</reference>
<reference key="5">
    <citation type="journal article" date="1966" name="Biochem. J.">
        <title>Histidine sequences in the active centres of some 'serine' proteinases.</title>
        <authorList>
            <person name="Smillie L.B."/>
            <person name="Hartley B.S."/>
        </authorList>
    </citation>
    <scope>ACTIVE SITE</scope>
</reference>
<reference key="6">
    <citation type="journal article" date="1970" name="Philos. Trans. R. Soc. Lond., B, Biol. Sci.">
        <title>I. Serine proteinases. The structure of alpha-chymotrypsin.</title>
        <authorList>
            <person name="Birktoft J.J."/>
            <person name="Blow D.M."/>
            <person name="Henderson R."/>
            <person name="Steitz T.A."/>
        </authorList>
    </citation>
    <scope>X-RAY CRYSTALLOGRAPHY (2.0 ANGSTROMS)</scope>
</reference>
<reference key="7">
    <citation type="journal article" date="1970" name="Biochemistry">
        <title>Chymotrypsinogen: 2.5-A crystal structure, comparison with alpha-chymotrypsin, and implications for zymogen activation.</title>
        <authorList>
            <person name="Freer S.T."/>
            <person name="Kraut J."/>
            <person name="Robertus J.D."/>
            <person name="Wright H.T."/>
            <person name="Xuong N.H."/>
        </authorList>
    </citation>
    <scope>X-RAY CRYSTALLOGRAPHY (2.5 ANGSTROMS) OF CHYMOTRYPSINOGEN</scope>
</reference>
<reference key="8">
    <citation type="journal article" date="1981" name="J. Mol. Biol.">
        <title>Refined crystal structure of gamma-chymotrypsin at 1.9-A resolution. Comparison with other pancreatic serine proteases.</title>
        <authorList>
            <person name="Cohen G.H."/>
            <person name="Silverton E.W."/>
            <person name="Davies D.R."/>
        </authorList>
    </citation>
    <scope>X-RAY CRYSTALLOGRAPHY (1.9 ANGSTROMS) OF GAMMA-CHYMOTRYPSIN</scope>
</reference>
<reference key="9">
    <citation type="journal article" date="1985" name="J. Mol. Biol.">
        <title>Structure of alpha-chymotrypsin refined at 1.68-A resolution.</title>
        <authorList>
            <person name="Tsukada H."/>
            <person name="Blow D.M."/>
        </authorList>
    </citation>
    <scope>X-RAY CRYSTALLOGRAPHY (1.68 ANGSTROMS) OF ALPHA-CHYMOTRYPSIN</scope>
</reference>
<organism>
    <name type="scientific">Bos taurus</name>
    <name type="common">Bovine</name>
    <dbReference type="NCBI Taxonomy" id="9913"/>
    <lineage>
        <taxon>Eukaryota</taxon>
        <taxon>Metazoa</taxon>
        <taxon>Chordata</taxon>
        <taxon>Craniata</taxon>
        <taxon>Vertebrata</taxon>
        <taxon>Euteleostomi</taxon>
        <taxon>Mammalia</taxon>
        <taxon>Eutheria</taxon>
        <taxon>Laurasiatheria</taxon>
        <taxon>Artiodactyla</taxon>
        <taxon>Ruminantia</taxon>
        <taxon>Pecora</taxon>
        <taxon>Bovidae</taxon>
        <taxon>Bovinae</taxon>
        <taxon>Bos</taxon>
    </lineage>
</organism>
<keyword id="KW-0002">3D-structure</keyword>
<keyword id="KW-0222">Digestion</keyword>
<keyword id="KW-0903">Direct protein sequencing</keyword>
<keyword id="KW-1015">Disulfide bond</keyword>
<keyword id="KW-0378">Hydrolase</keyword>
<keyword id="KW-0645">Protease</keyword>
<keyword id="KW-1185">Reference proteome</keyword>
<keyword id="KW-0964">Secreted</keyword>
<keyword id="KW-0720">Serine protease</keyword>
<keyword id="KW-0865">Zymogen</keyword>
<feature type="chain" id="PRO_0000027624" description="Chymotrypsin A chain A">
    <location>
        <begin position="1"/>
        <end position="13"/>
    </location>
</feature>
<feature type="propeptide" id="PRO_0000027625">
    <location>
        <begin position="14"/>
        <end position="15"/>
    </location>
</feature>
<feature type="chain" id="PRO_0000027626" description="Chymotrypsin A chain B">
    <location>
        <begin position="16"/>
        <end position="146"/>
    </location>
</feature>
<feature type="propeptide" id="PRO_0000027627">
    <location>
        <begin position="147"/>
        <end position="148"/>
    </location>
</feature>
<feature type="chain" id="PRO_0000027628" description="Chymotrypsin A chain C">
    <location>
        <begin position="149"/>
        <end position="245"/>
    </location>
</feature>
<feature type="domain" description="Peptidase S1" evidence="1">
    <location>
        <begin position="16"/>
        <end position="243"/>
    </location>
</feature>
<feature type="active site" description="Charge relay system">
    <location>
        <position position="57"/>
    </location>
</feature>
<feature type="active site" description="Charge relay system">
    <location>
        <position position="102"/>
    </location>
</feature>
<feature type="active site" description="Charge relay system">
    <location>
        <position position="195"/>
    </location>
</feature>
<feature type="disulfide bond">
    <location>
        <begin position="1"/>
        <end position="122"/>
    </location>
</feature>
<feature type="disulfide bond">
    <location>
        <begin position="42"/>
        <end position="58"/>
    </location>
</feature>
<feature type="disulfide bond">
    <location>
        <begin position="136"/>
        <end position="201"/>
    </location>
</feature>
<feature type="disulfide bond">
    <location>
        <begin position="168"/>
        <end position="182"/>
    </location>
</feature>
<feature type="disulfide bond">
    <location>
        <begin position="191"/>
        <end position="220"/>
    </location>
</feature>
<feature type="helix" evidence="8">
    <location>
        <begin position="12"/>
        <end position="15"/>
    </location>
</feature>
<feature type="strand" evidence="4">
    <location>
        <begin position="16"/>
        <end position="18"/>
    </location>
</feature>
<feature type="strand" evidence="6">
    <location>
        <begin position="26"/>
        <end position="28"/>
    </location>
</feature>
<feature type="strand" evidence="7">
    <location>
        <begin position="30"/>
        <end position="34"/>
    </location>
</feature>
<feature type="strand" evidence="10">
    <location>
        <begin position="36"/>
        <end position="38"/>
    </location>
</feature>
<feature type="strand" evidence="7">
    <location>
        <begin position="40"/>
        <end position="48"/>
    </location>
</feature>
<feature type="strand" evidence="7">
    <location>
        <begin position="51"/>
        <end position="54"/>
    </location>
</feature>
<feature type="helix" evidence="7">
    <location>
        <begin position="56"/>
        <end position="58"/>
    </location>
</feature>
<feature type="strand" evidence="7">
    <location>
        <begin position="64"/>
        <end position="69"/>
    </location>
</feature>
<feature type="strand" evidence="9">
    <location>
        <begin position="71"/>
        <end position="74"/>
    </location>
</feature>
<feature type="strand" evidence="7">
    <location>
        <begin position="76"/>
        <end position="78"/>
    </location>
</feature>
<feature type="strand" evidence="7">
    <location>
        <begin position="81"/>
        <end position="90"/>
    </location>
</feature>
<feature type="turn" evidence="7">
    <location>
        <begin position="96"/>
        <end position="98"/>
    </location>
</feature>
<feature type="strand" evidence="7">
    <location>
        <begin position="104"/>
        <end position="110"/>
    </location>
</feature>
<feature type="strand" evidence="10">
    <location>
        <begin position="115"/>
        <end position="117"/>
    </location>
</feature>
<feature type="strand" evidence="7">
    <location>
        <begin position="135"/>
        <end position="141"/>
    </location>
</feature>
<feature type="helix" evidence="8">
    <location>
        <begin position="142"/>
        <end position="145"/>
    </location>
</feature>
<feature type="turn" evidence="8">
    <location>
        <begin position="147"/>
        <end position="149"/>
    </location>
</feature>
<feature type="strand" evidence="7">
    <location>
        <begin position="156"/>
        <end position="162"/>
    </location>
</feature>
<feature type="helix" evidence="7">
    <location>
        <begin position="165"/>
        <end position="172"/>
    </location>
</feature>
<feature type="helix" evidence="7">
    <location>
        <begin position="173"/>
        <end position="175"/>
    </location>
</feature>
<feature type="strand" evidence="7">
    <location>
        <begin position="180"/>
        <end position="184"/>
    </location>
</feature>
<feature type="strand" evidence="8">
    <location>
        <begin position="186"/>
        <end position="188"/>
    </location>
</feature>
<feature type="turn" evidence="5">
    <location>
        <begin position="192"/>
        <end position="196"/>
    </location>
</feature>
<feature type="strand" evidence="7">
    <location>
        <begin position="198"/>
        <end position="203"/>
    </location>
</feature>
<feature type="strand" evidence="7">
    <location>
        <begin position="206"/>
        <end position="215"/>
    </location>
</feature>
<feature type="strand" evidence="7">
    <location>
        <begin position="224"/>
        <end position="230"/>
    </location>
</feature>
<feature type="helix" evidence="7">
    <location>
        <begin position="231"/>
        <end position="244"/>
    </location>
</feature>
<accession>P00766</accession>
<sequence length="245" mass="25666">CGVPAIQPVLSGLSRIVNGEEAVPGSWPWQVSLQDKTGFHFCGGSLINENWVVTAAHCGVTTSDVVVAGEFDQGSSSEKIQKLKIAKVFKNSKYNSLTINNDITLLKLSTAASFSQTVSAVCLPSASDDFAAGTTCVTTGWGLTRYTNANTPDRLQQASLPLLSNTNCKKYWGTKIKDAMICAGASGVSSCMGDSGGPLVCKKNGAWTLVGIVSWGSSTCSTSTPGVYARVTALVNWVQQTLAAN</sequence>
<dbReference type="EC" id="3.4.21.1"/>
<dbReference type="PIR" id="A90235">
    <property type="entry name" value="KYBOA"/>
</dbReference>
<dbReference type="PDB" id="1AB9">
    <property type="method" value="X-ray"/>
    <property type="resolution" value="1.60 A"/>
    <property type="chains" value="A=1-13, B=16-146, C=149-245"/>
</dbReference>
<dbReference type="PDB" id="1ACB">
    <property type="method" value="X-ray"/>
    <property type="resolution" value="2.00 A"/>
    <property type="chains" value="E=1-245"/>
</dbReference>
<dbReference type="PDB" id="1AFQ">
    <property type="method" value="X-ray"/>
    <property type="resolution" value="1.80 A"/>
    <property type="chains" value="A=1-13, B=16-146, C=150-245"/>
</dbReference>
<dbReference type="PDB" id="1CA0">
    <property type="method" value="X-ray"/>
    <property type="resolution" value="2.10 A"/>
    <property type="chains" value="A/F=1-13, B/G=16-146, C/H=149-245"/>
</dbReference>
<dbReference type="PDB" id="1CBW">
    <property type="method" value="X-ray"/>
    <property type="resolution" value="2.60 A"/>
    <property type="chains" value="B/G=16-146, C/H=149-245"/>
</dbReference>
<dbReference type="PDB" id="1CGI">
    <property type="method" value="X-ray"/>
    <property type="resolution" value="2.30 A"/>
    <property type="chains" value="E=1-245"/>
</dbReference>
<dbReference type="PDB" id="1CGJ">
    <property type="method" value="X-ray"/>
    <property type="resolution" value="2.30 A"/>
    <property type="chains" value="E=1-245"/>
</dbReference>
<dbReference type="PDB" id="1CHG">
    <property type="method" value="X-ray"/>
    <property type="resolution" value="2.50 A"/>
    <property type="chains" value="A=1-245"/>
</dbReference>
<dbReference type="PDB" id="1CHO">
    <property type="method" value="X-ray"/>
    <property type="resolution" value="1.80 A"/>
    <property type="chains" value="E=1-13, F=16-146, G=149-245"/>
</dbReference>
<dbReference type="PDB" id="1DLK">
    <property type="method" value="X-ray"/>
    <property type="resolution" value="2.14 A"/>
    <property type="chains" value="A/C=1-13, B/D=16-245"/>
</dbReference>
<dbReference type="PDB" id="1EX3">
    <property type="method" value="X-ray"/>
    <property type="resolution" value="3.00 A"/>
    <property type="chains" value="A=1-245"/>
</dbReference>
<dbReference type="PDB" id="1GCD">
    <property type="method" value="X-ray"/>
    <property type="resolution" value="1.90 A"/>
    <property type="chains" value="A=1-245"/>
</dbReference>
<dbReference type="PDB" id="1GCT">
    <property type="method" value="X-ray"/>
    <property type="resolution" value="1.60 A"/>
    <property type="chains" value="A=1-13, B=16-146, C=149-245"/>
</dbReference>
<dbReference type="PDB" id="1GG6">
    <property type="method" value="X-ray"/>
    <property type="resolution" value="1.40 A"/>
    <property type="chains" value="A=1-10, B=16-146, C=149-245"/>
</dbReference>
<dbReference type="PDB" id="1GGD">
    <property type="method" value="X-ray"/>
    <property type="resolution" value="1.50 A"/>
    <property type="chains" value="A=1-10, B=16-146, C=149-245"/>
</dbReference>
<dbReference type="PDB" id="1GHA">
    <property type="method" value="X-ray"/>
    <property type="resolution" value="2.20 A"/>
    <property type="chains" value="E=1-13, F=16-146, G=149-245"/>
</dbReference>
<dbReference type="PDB" id="1GHB">
    <property type="method" value="X-ray"/>
    <property type="resolution" value="2.00 A"/>
    <property type="chains" value="E=1-13, F=16-146, G=149-245"/>
</dbReference>
<dbReference type="PDB" id="1GL0">
    <property type="method" value="X-ray"/>
    <property type="resolution" value="3.00 A"/>
    <property type="chains" value="E=1-245"/>
</dbReference>
<dbReference type="PDB" id="1GL1">
    <property type="method" value="X-ray"/>
    <property type="resolution" value="2.10 A"/>
    <property type="chains" value="A/B/C=1-245"/>
</dbReference>
<dbReference type="PDB" id="1GMC">
    <property type="method" value="X-ray"/>
    <property type="resolution" value="2.20 A"/>
    <property type="chains" value="E=1-13, F=16-146, G=149-245"/>
</dbReference>
<dbReference type="PDB" id="1GMD">
    <property type="method" value="X-ray"/>
    <property type="resolution" value="2.20 A"/>
    <property type="chains" value="E=1-13, F=16-146, G=149-245"/>
</dbReference>
<dbReference type="PDB" id="1GMH">
    <property type="method" value="X-ray"/>
    <property type="resolution" value="2.10 A"/>
    <property type="chains" value="E=1-13, F=16-146, G=149-245"/>
</dbReference>
<dbReference type="PDB" id="1HJA">
    <property type="method" value="X-ray"/>
    <property type="resolution" value="2.30 A"/>
    <property type="chains" value="A=1-13, B=16-146, C=149-245"/>
</dbReference>
<dbReference type="PDB" id="1K2I">
    <property type="method" value="X-ray"/>
    <property type="resolution" value="1.80 A"/>
    <property type="chains" value="1=1-245"/>
</dbReference>
<dbReference type="PDB" id="1MTN">
    <property type="method" value="X-ray"/>
    <property type="resolution" value="2.80 A"/>
    <property type="chains" value="A/E=1-13, B/F=16-146, C/G=149-245"/>
</dbReference>
<dbReference type="PDB" id="1N8O">
    <property type="method" value="X-ray"/>
    <property type="resolution" value="2.00 A"/>
    <property type="chains" value="A=1-13, B=16-146, C=149-245"/>
</dbReference>
<dbReference type="PDB" id="1OXG">
    <property type="method" value="X-ray"/>
    <property type="resolution" value="2.20 A"/>
    <property type="chains" value="A=1-245, B=16-29"/>
</dbReference>
<dbReference type="PDB" id="1P2M">
    <property type="method" value="X-ray"/>
    <property type="resolution" value="1.75 A"/>
    <property type="chains" value="A/C=1-245"/>
</dbReference>
<dbReference type="PDB" id="1P2N">
    <property type="method" value="X-ray"/>
    <property type="resolution" value="1.80 A"/>
    <property type="chains" value="A/C=1-245"/>
</dbReference>
<dbReference type="PDB" id="1P2O">
    <property type="method" value="X-ray"/>
    <property type="resolution" value="2.00 A"/>
    <property type="chains" value="A/C=1-245"/>
</dbReference>
<dbReference type="PDB" id="1P2Q">
    <property type="method" value="X-ray"/>
    <property type="resolution" value="1.80 A"/>
    <property type="chains" value="A/C=1-245"/>
</dbReference>
<dbReference type="PDB" id="1T7C">
    <property type="method" value="X-ray"/>
    <property type="resolution" value="1.85 A"/>
    <property type="chains" value="A/C=1-245"/>
</dbReference>
<dbReference type="PDB" id="1T8L">
    <property type="method" value="X-ray"/>
    <property type="resolution" value="1.75 A"/>
    <property type="chains" value="A/C=1-245"/>
</dbReference>
<dbReference type="PDB" id="1T8M">
    <property type="method" value="X-ray"/>
    <property type="resolution" value="1.80 A"/>
    <property type="chains" value="A/C=1-245"/>
</dbReference>
<dbReference type="PDB" id="1T8N">
    <property type="method" value="X-ray"/>
    <property type="resolution" value="1.75 A"/>
    <property type="chains" value="A/C=1-245"/>
</dbReference>
<dbReference type="PDB" id="1T8O">
    <property type="method" value="X-ray"/>
    <property type="resolution" value="1.70 A"/>
    <property type="chains" value="A/C=1-245"/>
</dbReference>
<dbReference type="PDB" id="1VGC">
    <property type="method" value="X-ray"/>
    <property type="resolution" value="1.90 A"/>
    <property type="chains" value="A=1-13, B=16-146, C=149-245"/>
</dbReference>
<dbReference type="PDB" id="1YPH">
    <property type="method" value="X-ray"/>
    <property type="resolution" value="1.34 A"/>
    <property type="chains" value="A/B=1-13, C/D=16-146, E/F=149-245"/>
</dbReference>
<dbReference type="PDB" id="2CGA">
    <property type="method" value="X-ray"/>
    <property type="resolution" value="1.80 A"/>
    <property type="chains" value="A/B=1-245"/>
</dbReference>
<dbReference type="PDB" id="2CHA">
    <property type="method" value="X-ray"/>
    <property type="resolution" value="2.00 A"/>
    <property type="chains" value="A/E=1-13, B/F=16-146, C/G=149-245"/>
</dbReference>
<dbReference type="PDB" id="2GCH">
    <property type="method" value="X-ray"/>
    <property type="resolution" value="1.90 A"/>
    <property type="chains" value="E=1-13, F=16-146, G=149-245"/>
</dbReference>
<dbReference type="PDB" id="2GCT">
    <property type="method" value="X-ray"/>
    <property type="resolution" value="1.80 A"/>
    <property type="chains" value="A=1-13, B=16-146, C=149-245"/>
</dbReference>
<dbReference type="PDB" id="2GMT">
    <property type="method" value="X-ray"/>
    <property type="resolution" value="1.80 A"/>
    <property type="chains" value="A=1-13, B=16-146, C=149-245"/>
</dbReference>
<dbReference type="PDB" id="2P8O">
    <property type="method" value="X-ray"/>
    <property type="resolution" value="1.50 A"/>
    <property type="chains" value="A=1-13, B=16-146, C=149-245"/>
</dbReference>
<dbReference type="PDB" id="2VGC">
    <property type="method" value="X-ray"/>
    <property type="resolution" value="1.80 A"/>
    <property type="chains" value="A=1-13, B=16-146, C=149-245"/>
</dbReference>
<dbReference type="PDB" id="2Y6T">
    <property type="method" value="X-ray"/>
    <property type="resolution" value="2.74 A"/>
    <property type="chains" value="A/B/C/D=1-245"/>
</dbReference>
<dbReference type="PDB" id="3BG4">
    <property type="method" value="X-ray"/>
    <property type="resolution" value="2.50 A"/>
    <property type="chains" value="B=16-146, C=149-245"/>
</dbReference>
<dbReference type="PDB" id="3GCH">
    <property type="method" value="X-ray"/>
    <property type="resolution" value="1.90 A"/>
    <property type="chains" value="A=1-13, B=16-146, C=149-245"/>
</dbReference>
<dbReference type="PDB" id="3GCT">
    <property type="method" value="X-ray"/>
    <property type="resolution" value="1.60 A"/>
    <property type="chains" value="E=1-13, F=16-146, G=149-245"/>
</dbReference>
<dbReference type="PDB" id="3RU4">
    <property type="method" value="X-ray"/>
    <property type="resolution" value="1.68 A"/>
    <property type="chains" value="C=1-11, D=16-146, E=150-245"/>
</dbReference>
<dbReference type="PDB" id="3T62">
    <property type="method" value="X-ray"/>
    <property type="resolution" value="2.00 A"/>
    <property type="chains" value="A/B/C=1-245"/>
</dbReference>
<dbReference type="PDB" id="3VGC">
    <property type="method" value="X-ray"/>
    <property type="resolution" value="1.67 A"/>
    <property type="chains" value="A=1-13, B=16-146, C=149-245"/>
</dbReference>
<dbReference type="PDB" id="4CHA">
    <property type="method" value="X-ray"/>
    <property type="resolution" value="1.68 A"/>
    <property type="chains" value="A/E=1-13, B/F=16-146, C/G=149-245"/>
</dbReference>
<dbReference type="PDB" id="4GCH">
    <property type="method" value="X-ray"/>
    <property type="resolution" value="1.90 A"/>
    <property type="chains" value="E=1-13, F=16-146, G=149-245"/>
</dbReference>
<dbReference type="PDB" id="4Q2K">
    <property type="method" value="X-ray"/>
    <property type="resolution" value="2.20 A"/>
    <property type="chains" value="A/B/C/D=1-245"/>
</dbReference>
<dbReference type="PDB" id="4VGC">
    <property type="method" value="X-ray"/>
    <property type="resolution" value="2.10 A"/>
    <property type="chains" value="A=1-13, B=16-146, C=149-245"/>
</dbReference>
<dbReference type="PDB" id="5CHA">
    <property type="method" value="X-ray"/>
    <property type="resolution" value="1.67 A"/>
    <property type="chains" value="A/E=1-13, B/F=16-146, C/G=149-245"/>
</dbReference>
<dbReference type="PDB" id="5GCH">
    <property type="method" value="X-ray"/>
    <property type="resolution" value="2.70 A"/>
    <property type="chains" value="E=1-13, F=16-146, G=149-245"/>
</dbReference>
<dbReference type="PDB" id="5J4Q">
    <property type="method" value="X-ray"/>
    <property type="resolution" value="2.30 A"/>
    <property type="chains" value="A=1-245"/>
</dbReference>
<dbReference type="PDB" id="5J4S">
    <property type="method" value="X-ray"/>
    <property type="resolution" value="2.10 A"/>
    <property type="chains" value="A=1-245"/>
</dbReference>
<dbReference type="PDB" id="6CHA">
    <property type="method" value="X-ray"/>
    <property type="resolution" value="1.80 A"/>
    <property type="chains" value="A/E=1-13, B/F=16-146, C/G=149-245"/>
</dbReference>
<dbReference type="PDB" id="6GCH">
    <property type="method" value="X-ray"/>
    <property type="resolution" value="2.10 A"/>
    <property type="chains" value="E=1-13, F=16-146, G=149-245"/>
</dbReference>
<dbReference type="PDB" id="7GCH">
    <property type="method" value="X-ray"/>
    <property type="resolution" value="1.80 A"/>
    <property type="chains" value="E=1-13, F=16-146, G=149-245"/>
</dbReference>
<dbReference type="PDB" id="7KTY">
    <property type="method" value="X-ray"/>
    <property type="resolution" value="2.00 A"/>
    <property type="chains" value="A=1-245"/>
</dbReference>
<dbReference type="PDB" id="7KTZ">
    <property type="method" value="X-ray"/>
    <property type="resolution" value="2.00 A"/>
    <property type="chains" value="A=1-245"/>
</dbReference>
<dbReference type="PDB" id="7KU0">
    <property type="method" value="X-ray"/>
    <property type="resolution" value="2.02 A"/>
    <property type="chains" value="A=1-245"/>
</dbReference>
<dbReference type="PDB" id="7KU1">
    <property type="method" value="X-ray"/>
    <property type="resolution" value="2.39 A"/>
    <property type="chains" value="A=1-245"/>
</dbReference>
<dbReference type="PDB" id="7KU2">
    <property type="method" value="X-ray"/>
    <property type="resolution" value="2.19 A"/>
    <property type="chains" value="A=1-245"/>
</dbReference>
<dbReference type="PDB" id="7KU3">
    <property type="method" value="X-ray"/>
    <property type="resolution" value="2.00 A"/>
    <property type="chains" value="A=1-245"/>
</dbReference>
<dbReference type="PDB" id="8GCH">
    <property type="method" value="X-ray"/>
    <property type="resolution" value="1.60 A"/>
    <property type="chains" value="E=1-13, F=16-146, G=149-245"/>
</dbReference>
<dbReference type="PDBsum" id="1AB9"/>
<dbReference type="PDBsum" id="1ACB"/>
<dbReference type="PDBsum" id="1AFQ"/>
<dbReference type="PDBsum" id="1CA0"/>
<dbReference type="PDBsum" id="1CBW"/>
<dbReference type="PDBsum" id="1CGI"/>
<dbReference type="PDBsum" id="1CGJ"/>
<dbReference type="PDBsum" id="1CHG"/>
<dbReference type="PDBsum" id="1CHO"/>
<dbReference type="PDBsum" id="1DLK"/>
<dbReference type="PDBsum" id="1EX3"/>
<dbReference type="PDBsum" id="1GCD"/>
<dbReference type="PDBsum" id="1GCT"/>
<dbReference type="PDBsum" id="1GG6"/>
<dbReference type="PDBsum" id="1GGD"/>
<dbReference type="PDBsum" id="1GHA"/>
<dbReference type="PDBsum" id="1GHB"/>
<dbReference type="PDBsum" id="1GL0"/>
<dbReference type="PDBsum" id="1GL1"/>
<dbReference type="PDBsum" id="1GMC"/>
<dbReference type="PDBsum" id="1GMD"/>
<dbReference type="PDBsum" id="1GMH"/>
<dbReference type="PDBsum" id="1HJA"/>
<dbReference type="PDBsum" id="1K2I"/>
<dbReference type="PDBsum" id="1MTN"/>
<dbReference type="PDBsum" id="1N8O"/>
<dbReference type="PDBsum" id="1OXG"/>
<dbReference type="PDBsum" id="1P2M"/>
<dbReference type="PDBsum" id="1P2N"/>
<dbReference type="PDBsum" id="1P2O"/>
<dbReference type="PDBsum" id="1P2Q"/>
<dbReference type="PDBsum" id="1T7C"/>
<dbReference type="PDBsum" id="1T8L"/>
<dbReference type="PDBsum" id="1T8M"/>
<dbReference type="PDBsum" id="1T8N"/>
<dbReference type="PDBsum" id="1T8O"/>
<dbReference type="PDBsum" id="1VGC"/>
<dbReference type="PDBsum" id="1YPH"/>
<dbReference type="PDBsum" id="2CGA"/>
<dbReference type="PDBsum" id="2CHA"/>
<dbReference type="PDBsum" id="2GCH"/>
<dbReference type="PDBsum" id="2GCT"/>
<dbReference type="PDBsum" id="2GMT"/>
<dbReference type="PDBsum" id="2P8O"/>
<dbReference type="PDBsum" id="2VGC"/>
<dbReference type="PDBsum" id="2Y6T"/>
<dbReference type="PDBsum" id="3BG4"/>
<dbReference type="PDBsum" id="3GCH"/>
<dbReference type="PDBsum" id="3GCT"/>
<dbReference type="PDBsum" id="3RU4"/>
<dbReference type="PDBsum" id="3T62"/>
<dbReference type="PDBsum" id="3VGC"/>
<dbReference type="PDBsum" id="4CHA"/>
<dbReference type="PDBsum" id="4GCH"/>
<dbReference type="PDBsum" id="4Q2K"/>
<dbReference type="PDBsum" id="4VGC"/>
<dbReference type="PDBsum" id="5CHA"/>
<dbReference type="PDBsum" id="5GCH"/>
<dbReference type="PDBsum" id="5J4Q"/>
<dbReference type="PDBsum" id="5J4S"/>
<dbReference type="PDBsum" id="6CHA"/>
<dbReference type="PDBsum" id="6GCH"/>
<dbReference type="PDBsum" id="7GCH"/>
<dbReference type="PDBsum" id="7KTY"/>
<dbReference type="PDBsum" id="7KTZ"/>
<dbReference type="PDBsum" id="7KU0"/>
<dbReference type="PDBsum" id="7KU1"/>
<dbReference type="PDBsum" id="7KU2"/>
<dbReference type="PDBsum" id="7KU3"/>
<dbReference type="PDBsum" id="8GCH"/>
<dbReference type="BMRB" id="P00766"/>
<dbReference type="PCDDB" id="P00766"/>
<dbReference type="SASBDB" id="P00766"/>
<dbReference type="SMR" id="P00766"/>
<dbReference type="DIP" id="DIP-6068N"/>
<dbReference type="FunCoup" id="P00766">
    <property type="interactions" value="23"/>
</dbReference>
<dbReference type="IntAct" id="P00766">
    <property type="interactions" value="2"/>
</dbReference>
<dbReference type="MINT" id="P00766"/>
<dbReference type="BindingDB" id="P00766"/>
<dbReference type="ChEMBL" id="CHEMBL3314"/>
<dbReference type="DrugCentral" id="P00766"/>
<dbReference type="MEROPS" id="S01.001"/>
<dbReference type="MetOSite" id="P00766"/>
<dbReference type="PaxDb" id="9913-ENSBTAP00000015915"/>
<dbReference type="eggNOG" id="KOG3627">
    <property type="taxonomic scope" value="Eukaryota"/>
</dbReference>
<dbReference type="HOGENOM" id="CLU_006842_7_6_1"/>
<dbReference type="InParanoid" id="P00766"/>
<dbReference type="BRENDA" id="3.4.21.1">
    <property type="organism ID" value="908"/>
</dbReference>
<dbReference type="EvolutionaryTrace" id="P00766"/>
<dbReference type="Proteomes" id="UP000009136">
    <property type="component" value="Unplaced"/>
</dbReference>
<dbReference type="GO" id="GO:0005576">
    <property type="term" value="C:extracellular region"/>
    <property type="evidence" value="ECO:0007669"/>
    <property type="project" value="UniProtKB-SubCell"/>
</dbReference>
<dbReference type="GO" id="GO:0097180">
    <property type="term" value="C:serine protease inhibitor complex"/>
    <property type="evidence" value="ECO:0000314"/>
    <property type="project" value="CAFA"/>
</dbReference>
<dbReference type="GO" id="GO:0004252">
    <property type="term" value="F:serine-type endopeptidase activity"/>
    <property type="evidence" value="ECO:0000318"/>
    <property type="project" value="GO_Central"/>
</dbReference>
<dbReference type="GO" id="GO:0097655">
    <property type="term" value="F:serpin family protein binding"/>
    <property type="evidence" value="ECO:0000314"/>
    <property type="project" value="CAFA"/>
</dbReference>
<dbReference type="GO" id="GO:0007586">
    <property type="term" value="P:digestion"/>
    <property type="evidence" value="ECO:0007669"/>
    <property type="project" value="UniProtKB-KW"/>
</dbReference>
<dbReference type="GO" id="GO:0006508">
    <property type="term" value="P:proteolysis"/>
    <property type="evidence" value="ECO:0000318"/>
    <property type="project" value="GO_Central"/>
</dbReference>
<dbReference type="CDD" id="cd00190">
    <property type="entry name" value="Tryp_SPc"/>
    <property type="match status" value="1"/>
</dbReference>
<dbReference type="FunFam" id="2.40.10.10:FF:000118">
    <property type="entry name" value="Chymotrypsinogen A"/>
    <property type="match status" value="1"/>
</dbReference>
<dbReference type="FunFam" id="2.40.10.10:FF:000176">
    <property type="entry name" value="Chymotrypsinogen A"/>
    <property type="match status" value="1"/>
</dbReference>
<dbReference type="Gene3D" id="2.40.10.10">
    <property type="entry name" value="Trypsin-like serine proteases"/>
    <property type="match status" value="2"/>
</dbReference>
<dbReference type="InterPro" id="IPR009003">
    <property type="entry name" value="Peptidase_S1_PA"/>
</dbReference>
<dbReference type="InterPro" id="IPR043504">
    <property type="entry name" value="Peptidase_S1_PA_chymotrypsin"/>
</dbReference>
<dbReference type="InterPro" id="IPR001314">
    <property type="entry name" value="Peptidase_S1A"/>
</dbReference>
<dbReference type="InterPro" id="IPR001254">
    <property type="entry name" value="Trypsin_dom"/>
</dbReference>
<dbReference type="InterPro" id="IPR018114">
    <property type="entry name" value="TRYPSIN_HIS"/>
</dbReference>
<dbReference type="InterPro" id="IPR033116">
    <property type="entry name" value="TRYPSIN_SER"/>
</dbReference>
<dbReference type="PANTHER" id="PTHR24250:SF66">
    <property type="entry name" value="CHYMOTRYPSIN-LIKE PROTEASE CTRL-1"/>
    <property type="match status" value="1"/>
</dbReference>
<dbReference type="PANTHER" id="PTHR24250">
    <property type="entry name" value="CHYMOTRYPSIN-RELATED"/>
    <property type="match status" value="1"/>
</dbReference>
<dbReference type="Pfam" id="PF00089">
    <property type="entry name" value="Trypsin"/>
    <property type="match status" value="1"/>
</dbReference>
<dbReference type="PRINTS" id="PR00722">
    <property type="entry name" value="CHYMOTRYPSIN"/>
</dbReference>
<dbReference type="SMART" id="SM00020">
    <property type="entry name" value="Tryp_SPc"/>
    <property type="match status" value="1"/>
</dbReference>
<dbReference type="SUPFAM" id="SSF50494">
    <property type="entry name" value="Trypsin-like serine proteases"/>
    <property type="match status" value="1"/>
</dbReference>
<dbReference type="PROSITE" id="PS50240">
    <property type="entry name" value="TRYPSIN_DOM"/>
    <property type="match status" value="1"/>
</dbReference>
<dbReference type="PROSITE" id="PS00134">
    <property type="entry name" value="TRYPSIN_HIS"/>
    <property type="match status" value="1"/>
</dbReference>
<dbReference type="PROSITE" id="PS00135">
    <property type="entry name" value="TRYPSIN_SER"/>
    <property type="match status" value="1"/>
</dbReference>
<comment type="catalytic activity">
    <reaction evidence="2 3">
        <text>Preferential cleavage: Tyr-|-Xaa, Trp-|-Xaa, Phe-|-Xaa, Leu-|-Xaa.</text>
        <dbReference type="EC" id="3.4.21.1"/>
    </reaction>
</comment>
<comment type="interaction">
    <interactant intactId="EBI-6664027">
        <id>P00766</id>
    </interactant>
    <interactant intactId="EBI-6663991">
        <id>P10184</id>
        <label>SPINK5</label>
    </interactant>
    <organismsDiffer>true</organismsDiffer>
    <experiments>2</experiments>
</comment>
<comment type="subcellular location">
    <subcellularLocation>
        <location>Secreted</location>
        <location>Extracellular space</location>
    </subcellularLocation>
</comment>
<comment type="similarity">
    <text evidence="1">Belongs to the peptidase S1 family.</text>
</comment>
<proteinExistence type="evidence at protein level"/>
<name>CTRA_BOVIN</name>